<sequence length="606" mass="69422">MSKSLEWDNLGFSLLPWIRTGLDVMGFETMTPVQASTIPMLAGNKDVVVDSVTGSGKTAAFVIPVLEKVVKEEANTSKFKKAHFHSLIIAPTRELSRQIESVVLSFLEHYPSDLFPIKCQLLVGTNEATVRDDVSNFLRNRPQILIGTPGRVLDFLQMPAVKTSACSMVVMDEADRLLDMSFIKDTEKILRLLPKQRRTGLFSATMRSAGSDIFKTGLRNPVRITVNSKNQAPSSLKLNYCVVNPAEKLQLLVSILNNYKFKKCIVYFPTCVSVSYFYSFIQYLGKRNILVNEVEIFSLHGKLQTSARTKTLTAFTDSLSNSVLFTTDVAARGIDIPDVDLVIQLDPPTNTDMFMHRCGRTGRANRVGKAITFLNEGREEDFIPFMQVKNVELEELDLEVKGITTNFYEDFRNWILEDRDRFDKGVKAYVAFIKYYSNHSATSIFRLQSLDYVGIAKLYGLFRLPRMPEITKYLATEKQEGIFPGNWLVDPPVNMDEYKYKDKKREKERQETLKNISLINDKKKLKSELKKKNLAWSDKTLTKERKLERKEKMSLKRKAIEEELKAEELDENAEEERIKEDWKEIVLQNKRKKVSSKAIQGNFDDL</sequence>
<dbReference type="EC" id="3.6.4.13" evidence="9"/>
<dbReference type="EMBL" id="X16147">
    <property type="protein sequence ID" value="CAA34272.1"/>
    <property type="molecule type" value="Genomic_DNA"/>
</dbReference>
<dbReference type="EMBL" id="D50617">
    <property type="protein sequence ID" value="BAA09238.1"/>
    <property type="molecule type" value="Genomic_DNA"/>
</dbReference>
<dbReference type="EMBL" id="BK006940">
    <property type="protein sequence ID" value="DAA12439.1"/>
    <property type="molecule type" value="Genomic_DNA"/>
</dbReference>
<dbReference type="PIR" id="S14942">
    <property type="entry name" value="S14942"/>
</dbReference>
<dbReference type="RefSeq" id="NP_116654.1">
    <property type="nucleotide sequence ID" value="NM_001179964.1"/>
</dbReference>
<dbReference type="PDB" id="7NAC">
    <property type="method" value="EM"/>
    <property type="resolution" value="3.04 A"/>
    <property type="chains" value="x=1-606"/>
</dbReference>
<dbReference type="PDB" id="7NAD">
    <property type="method" value="EM"/>
    <property type="resolution" value="3.04 A"/>
    <property type="chains" value="x=1-606"/>
</dbReference>
<dbReference type="PDB" id="7R72">
    <property type="method" value="EM"/>
    <property type="resolution" value="3.07 A"/>
    <property type="chains" value="x=1-606"/>
</dbReference>
<dbReference type="PDB" id="7R7A">
    <property type="method" value="EM"/>
    <property type="resolution" value="3.04 A"/>
    <property type="chains" value="x=1-606"/>
</dbReference>
<dbReference type="PDBsum" id="7NAC"/>
<dbReference type="PDBsum" id="7NAD"/>
<dbReference type="PDBsum" id="7R72"/>
<dbReference type="PDBsum" id="7R7A"/>
<dbReference type="SMR" id="P25808"/>
<dbReference type="BioGRID" id="31147">
    <property type="interactions" value="694"/>
</dbReference>
<dbReference type="DIP" id="DIP-5423N"/>
<dbReference type="FunCoup" id="P25808">
    <property type="interactions" value="1405"/>
</dbReference>
<dbReference type="IntAct" id="P25808">
    <property type="interactions" value="56"/>
</dbReference>
<dbReference type="MINT" id="P25808"/>
<dbReference type="STRING" id="4932.YFL002C"/>
<dbReference type="iPTMnet" id="P25808"/>
<dbReference type="PaxDb" id="4932-YFL002C"/>
<dbReference type="PeptideAtlas" id="P25808"/>
<dbReference type="EnsemblFungi" id="YFL002C_mRNA">
    <property type="protein sequence ID" value="YFL002C"/>
    <property type="gene ID" value="YFL002C"/>
</dbReference>
<dbReference type="GeneID" id="850549"/>
<dbReference type="KEGG" id="sce:YFL002C"/>
<dbReference type="AGR" id="SGD:S000001894"/>
<dbReference type="SGD" id="S000001894">
    <property type="gene designation" value="SPB4"/>
</dbReference>
<dbReference type="VEuPathDB" id="FungiDB:YFL002C"/>
<dbReference type="eggNOG" id="KOG0345">
    <property type="taxonomic scope" value="Eukaryota"/>
</dbReference>
<dbReference type="GeneTree" id="ENSGT00550000074969"/>
<dbReference type="HOGENOM" id="CLU_003041_26_4_1"/>
<dbReference type="InParanoid" id="P25808"/>
<dbReference type="OMA" id="AYKEHEC"/>
<dbReference type="OrthoDB" id="7396459at2759"/>
<dbReference type="BioCyc" id="YEAST:G3O-30452-MONOMER"/>
<dbReference type="BioGRID-ORCS" id="850549">
    <property type="hits" value="2 hits in 10 CRISPR screens"/>
</dbReference>
<dbReference type="CD-CODE" id="BDAE0F88">
    <property type="entry name" value="Nucleolus"/>
</dbReference>
<dbReference type="PRO" id="PR:P25808"/>
<dbReference type="Proteomes" id="UP000002311">
    <property type="component" value="Chromosome VI"/>
</dbReference>
<dbReference type="RNAct" id="P25808">
    <property type="molecule type" value="protein"/>
</dbReference>
<dbReference type="GO" id="GO:0030686">
    <property type="term" value="C:90S preribosome"/>
    <property type="evidence" value="ECO:0000314"/>
    <property type="project" value="SGD"/>
</dbReference>
<dbReference type="GO" id="GO:0005730">
    <property type="term" value="C:nucleolus"/>
    <property type="evidence" value="ECO:0000314"/>
    <property type="project" value="SGD"/>
</dbReference>
<dbReference type="GO" id="GO:0005654">
    <property type="term" value="C:nucleoplasm"/>
    <property type="evidence" value="ECO:0000314"/>
    <property type="project" value="SGD"/>
</dbReference>
<dbReference type="GO" id="GO:0030687">
    <property type="term" value="C:preribosome, large subunit precursor"/>
    <property type="evidence" value="ECO:0000314"/>
    <property type="project" value="SGD"/>
</dbReference>
<dbReference type="GO" id="GO:0005524">
    <property type="term" value="F:ATP binding"/>
    <property type="evidence" value="ECO:0007669"/>
    <property type="project" value="UniProtKB-KW"/>
</dbReference>
<dbReference type="GO" id="GO:0016887">
    <property type="term" value="F:ATP hydrolysis activity"/>
    <property type="evidence" value="ECO:0007669"/>
    <property type="project" value="RHEA"/>
</dbReference>
<dbReference type="GO" id="GO:0003723">
    <property type="term" value="F:RNA binding"/>
    <property type="evidence" value="ECO:0007669"/>
    <property type="project" value="UniProtKB-KW"/>
</dbReference>
<dbReference type="GO" id="GO:0003724">
    <property type="term" value="F:RNA helicase activity"/>
    <property type="evidence" value="ECO:0000250"/>
    <property type="project" value="SGD"/>
</dbReference>
<dbReference type="GO" id="GO:1902626">
    <property type="term" value="P:assembly of large subunit precursor of preribosome"/>
    <property type="evidence" value="ECO:0000315"/>
    <property type="project" value="SGD"/>
</dbReference>
<dbReference type="GO" id="GO:0000470">
    <property type="term" value="P:maturation of LSU-rRNA"/>
    <property type="evidence" value="ECO:0000315"/>
    <property type="project" value="SGD"/>
</dbReference>
<dbReference type="GO" id="GO:0000027">
    <property type="term" value="P:ribosomal large subunit assembly"/>
    <property type="evidence" value="ECO:0000315"/>
    <property type="project" value="SGD"/>
</dbReference>
<dbReference type="CDD" id="cd17960">
    <property type="entry name" value="DEADc_DDX55"/>
    <property type="match status" value="1"/>
</dbReference>
<dbReference type="CDD" id="cd18787">
    <property type="entry name" value="SF2_C_DEAD"/>
    <property type="match status" value="1"/>
</dbReference>
<dbReference type="FunFam" id="3.40.50.300:FF:002539">
    <property type="entry name" value="RNA helicase"/>
    <property type="match status" value="1"/>
</dbReference>
<dbReference type="Gene3D" id="3.40.50.300">
    <property type="entry name" value="P-loop containing nucleotide triphosphate hydrolases"/>
    <property type="match status" value="2"/>
</dbReference>
<dbReference type="InterPro" id="IPR056330">
    <property type="entry name" value="CTT_SPB4"/>
</dbReference>
<dbReference type="InterPro" id="IPR011545">
    <property type="entry name" value="DEAD/DEAH_box_helicase_dom"/>
</dbReference>
<dbReference type="InterPro" id="IPR014001">
    <property type="entry name" value="Helicase_ATP-bd"/>
</dbReference>
<dbReference type="InterPro" id="IPR001650">
    <property type="entry name" value="Helicase_C-like"/>
</dbReference>
<dbReference type="InterPro" id="IPR027417">
    <property type="entry name" value="P-loop_NTPase"/>
</dbReference>
<dbReference type="InterPro" id="IPR000629">
    <property type="entry name" value="RNA-helicase_DEAD-box_CS"/>
</dbReference>
<dbReference type="InterPro" id="IPR014014">
    <property type="entry name" value="RNA_helicase_DEAD_Q_motif"/>
</dbReference>
<dbReference type="InterPro" id="IPR025313">
    <property type="entry name" value="SPB4-like_CTE"/>
</dbReference>
<dbReference type="PANTHER" id="PTHR24031">
    <property type="entry name" value="RNA HELICASE"/>
    <property type="match status" value="1"/>
</dbReference>
<dbReference type="Pfam" id="PF13959">
    <property type="entry name" value="CTE_SPB4"/>
    <property type="match status" value="1"/>
</dbReference>
<dbReference type="Pfam" id="PF23681">
    <property type="entry name" value="CTT_SPB4"/>
    <property type="match status" value="1"/>
</dbReference>
<dbReference type="Pfam" id="PF00270">
    <property type="entry name" value="DEAD"/>
    <property type="match status" value="1"/>
</dbReference>
<dbReference type="Pfam" id="PF00271">
    <property type="entry name" value="Helicase_C"/>
    <property type="match status" value="1"/>
</dbReference>
<dbReference type="SMART" id="SM00487">
    <property type="entry name" value="DEXDc"/>
    <property type="match status" value="1"/>
</dbReference>
<dbReference type="SMART" id="SM01178">
    <property type="entry name" value="DUF4217"/>
    <property type="match status" value="1"/>
</dbReference>
<dbReference type="SMART" id="SM00490">
    <property type="entry name" value="HELICc"/>
    <property type="match status" value="1"/>
</dbReference>
<dbReference type="SUPFAM" id="SSF52540">
    <property type="entry name" value="P-loop containing nucleoside triphosphate hydrolases"/>
    <property type="match status" value="1"/>
</dbReference>
<dbReference type="PROSITE" id="PS00039">
    <property type="entry name" value="DEAD_ATP_HELICASE"/>
    <property type="match status" value="1"/>
</dbReference>
<dbReference type="PROSITE" id="PS51192">
    <property type="entry name" value="HELICASE_ATP_BIND_1"/>
    <property type="match status" value="1"/>
</dbReference>
<dbReference type="PROSITE" id="PS51194">
    <property type="entry name" value="HELICASE_CTER"/>
    <property type="match status" value="1"/>
</dbReference>
<dbReference type="PROSITE" id="PS51195">
    <property type="entry name" value="Q_MOTIF"/>
    <property type="match status" value="1"/>
</dbReference>
<reference key="1">
    <citation type="journal article" date="1990" name="Science">
        <title>Translation initiation and ribosomal biogenesis: involvement of a putative rRNA helicase and RPL46.</title>
        <authorList>
            <person name="Sachs A.B."/>
            <person name="Davis R.W."/>
        </authorList>
    </citation>
    <scope>NUCLEOTIDE SEQUENCE [GENOMIC DNA]</scope>
    <scope>FUNCTION</scope>
    <scope>CATALYTIC ACTIVITY</scope>
</reference>
<reference key="2">
    <citation type="journal article" date="1996" name="Yeast">
        <title>Sequencing of a 23 kb fragment from Saccharomyces cerevisiae chromosome VI.</title>
        <authorList>
            <person name="Naitou M."/>
            <person name="Ozawa M."/>
            <person name="Sasanuma S."/>
            <person name="Kobayashi M."/>
            <person name="Hagiwara H."/>
            <person name="Shibata T."/>
            <person name="Hanaoka F."/>
            <person name="Watanabe K."/>
            <person name="Ono A."/>
            <person name="Yamazaki M."/>
            <person name="Tashiro H."/>
            <person name="Eki T."/>
            <person name="Murakami Y."/>
        </authorList>
    </citation>
    <scope>NUCLEOTIDE SEQUENCE [GENOMIC DNA]</scope>
    <source>
        <strain>ATCC 204511 / S288c / AB972</strain>
    </source>
</reference>
<reference key="3">
    <citation type="journal article" date="1995" name="Nat. Genet.">
        <title>Analysis of the nucleotide sequence of chromosome VI from Saccharomyces cerevisiae.</title>
        <authorList>
            <person name="Murakami Y."/>
            <person name="Naitou M."/>
            <person name="Hagiwara H."/>
            <person name="Shibata T."/>
            <person name="Ozawa M."/>
            <person name="Sasanuma S."/>
            <person name="Sasanuma M."/>
            <person name="Tsuchiya Y."/>
            <person name="Soeda E."/>
            <person name="Yokoyama K."/>
            <person name="Yamazaki M."/>
            <person name="Tashiro H."/>
            <person name="Eki T."/>
        </authorList>
    </citation>
    <scope>NUCLEOTIDE SEQUENCE [LARGE SCALE GENOMIC DNA]</scope>
    <source>
        <strain>ATCC 204508 / S288c</strain>
    </source>
</reference>
<reference key="4">
    <citation type="journal article" date="2014" name="G3 (Bethesda)">
        <title>The reference genome sequence of Saccharomyces cerevisiae: Then and now.</title>
        <authorList>
            <person name="Engel S.R."/>
            <person name="Dietrich F.S."/>
            <person name="Fisk D.G."/>
            <person name="Binkley G."/>
            <person name="Balakrishnan R."/>
            <person name="Costanzo M.C."/>
            <person name="Dwight S.S."/>
            <person name="Hitz B.C."/>
            <person name="Karra K."/>
            <person name="Nash R.S."/>
            <person name="Weng S."/>
            <person name="Wong E.D."/>
            <person name="Lloyd P."/>
            <person name="Skrzypek M.S."/>
            <person name="Miyasato S.R."/>
            <person name="Simison M."/>
            <person name="Cherry J.M."/>
        </authorList>
    </citation>
    <scope>GENOME REANNOTATION</scope>
    <source>
        <strain>ATCC 204508 / S288c</strain>
    </source>
</reference>
<reference key="5">
    <citation type="journal article" date="1998" name="RNA">
        <title>Spb4p, an essential putative RNA helicase, is required for a late step in the assembly of 60S ribosomal subunits in Saccharomyces cerevisiae.</title>
        <authorList>
            <person name="de la Cruz J."/>
            <person name="Kressler D."/>
            <person name="Rojo M."/>
            <person name="Tollervey D."/>
            <person name="Linder P."/>
        </authorList>
    </citation>
    <scope>FUNCTION</scope>
    <scope>SUBCELLULAR LOCATION</scope>
</reference>
<reference key="6">
    <citation type="journal article" date="2003" name="Nature">
        <title>Global analysis of protein localization in budding yeast.</title>
        <authorList>
            <person name="Huh W.-K."/>
            <person name="Falvo J.V."/>
            <person name="Gerke L.C."/>
            <person name="Carroll A.S."/>
            <person name="Howson R.W."/>
            <person name="Weissman J.S."/>
            <person name="O'Shea E.K."/>
        </authorList>
    </citation>
    <scope>SUBCELLULAR LOCATION [LARGE SCALE ANALYSIS]</scope>
</reference>
<reference key="7">
    <citation type="journal article" date="2003" name="Nature">
        <title>Global analysis of protein expression in yeast.</title>
        <authorList>
            <person name="Ghaemmaghami S."/>
            <person name="Huh W.-K."/>
            <person name="Bower K."/>
            <person name="Howson R.W."/>
            <person name="Belle A."/>
            <person name="Dephoure N."/>
            <person name="O'Shea E.K."/>
            <person name="Weissman J.S."/>
        </authorList>
    </citation>
    <scope>LEVEL OF PROTEIN EXPRESSION [LARGE SCALE ANALYSIS]</scope>
</reference>
<reference key="8">
    <citation type="journal article" date="2007" name="Proc. Natl. Acad. Sci. U.S.A.">
        <title>Analysis of phosphorylation sites on proteins from Saccharomyces cerevisiae by electron transfer dissociation (ETD) mass spectrometry.</title>
        <authorList>
            <person name="Chi A."/>
            <person name="Huttenhower C."/>
            <person name="Geer L.Y."/>
            <person name="Coon J.J."/>
            <person name="Syka J.E.P."/>
            <person name="Bai D.L."/>
            <person name="Shabanowitz J."/>
            <person name="Burke D.J."/>
            <person name="Troyanskaya O.G."/>
            <person name="Hunt D.F."/>
        </authorList>
    </citation>
    <scope>PHOSPHORYLATION [LARGE SCALE ANALYSIS] AT SER-254</scope>
    <scope>IDENTIFICATION BY MASS SPECTROMETRY [LARGE SCALE ANALYSIS]</scope>
</reference>
<reference key="9">
    <citation type="journal article" date="2011" name="Mol. Cell. Biol.">
        <title>Dynamics of the putative RNA helicase Spb4 during ribosome assembly in Saccharomyces cerevisiae.</title>
        <authorList>
            <person name="Garcia-Gomez J.J."/>
            <person name="Lebaron S."/>
            <person name="Froment C."/>
            <person name="Monsarrat B."/>
            <person name="Henry Y."/>
            <person name="de la Cruz J."/>
        </authorList>
    </citation>
    <scope>FUNCTION</scope>
    <scope>IDENTIFICATION IN PRE-60S RIBOSOMAL COMPLEXES</scope>
    <scope>MUTAGENESIS OF ARG-360</scope>
</reference>
<reference key="10">
    <citation type="journal article" date="2012" name="Nucleic Acids Res.">
        <title>Hierarchical recruitment into nascent ribosomes of assembly factors required for 27SB pre-rRNA processing in Saccharomyces cerevisiae.</title>
        <authorList>
            <person name="Talkish J."/>
            <person name="Zhang J."/>
            <person name="Jakovljevic J."/>
            <person name="Horsey E.W."/>
            <person name="Woolford J.L. Jr."/>
        </authorList>
    </citation>
    <scope>FUNCTION</scope>
    <scope>IDENTIFICATION IN PRE-60S RIBOSOMAL COMPLEXES</scope>
</reference>
<reference key="11">
    <citation type="journal article" date="2013" name="PLoS ONE">
        <title>Studies on the assembly characteristics of large subunit ribosomal proteins in S. cerevisae.</title>
        <authorList>
            <person name="Ohmayer U."/>
            <person name="Gamalinda M."/>
            <person name="Sauert M."/>
            <person name="Ossowski J."/>
            <person name="Poell G."/>
            <person name="Linnemann J."/>
            <person name="Hierlmeier T."/>
            <person name="Perez-Fernandez J."/>
            <person name="Kumcuoglu B."/>
            <person name="Leger-Silvestre I."/>
            <person name="Faubladier M."/>
            <person name="Griesenbeck J."/>
            <person name="Woolford J."/>
            <person name="Tschochner H."/>
            <person name="Milkereit P."/>
        </authorList>
    </citation>
    <scope>IDENTIFICATION IN PRE-60S RIBOSOMAL COMPLEXES</scope>
</reference>
<reference key="12">
    <citation type="journal article" date="2015" name="Methods Mol. Biol.">
        <title>Dynamics of the Spb4 interactome monitored by affinity purification.</title>
        <authorList>
            <person name="Garcia-Gomez J.J."/>
            <person name="Lebaron S."/>
            <person name="Henry Y."/>
            <person name="de la Cruz J."/>
        </authorList>
    </citation>
    <scope>FUNCTION</scope>
    <scope>IDENTIFICATION IN PRE-60S RIBOSOMAL COMPLEXES</scope>
</reference>
<comment type="function">
    <text evidence="6 7 9 10 11">ATP-binding RNA helicase involved in the biogenesis of 60S ribosomal subunits (PubMed:2408148, PubMed:25579579). Binds 90S pre-ribosomal particles and dissociates from pre-60S ribosomal particles after processing of 27SB pre-rRNA (PubMed:21825077). Required for the normal formation of 18S rRNA through the processing of pre-rRNAs at sites A0, A1 and A2, and the normal formation of 25S and 5.8S rRNAs through the processing of pre-rRNAs at sites C1 and C2 (PubMed:9769101). Also required for recruitment of NOG2 to pre-ribosomes (PubMed:22735702).</text>
</comment>
<comment type="catalytic activity">
    <reaction evidence="9">
        <text>ATP + H2O = ADP + phosphate + H(+)</text>
        <dbReference type="Rhea" id="RHEA:13065"/>
        <dbReference type="ChEBI" id="CHEBI:15377"/>
        <dbReference type="ChEBI" id="CHEBI:15378"/>
        <dbReference type="ChEBI" id="CHEBI:30616"/>
        <dbReference type="ChEBI" id="CHEBI:43474"/>
        <dbReference type="ChEBI" id="CHEBI:456216"/>
        <dbReference type="EC" id="3.6.4.13"/>
    </reaction>
</comment>
<comment type="subunit">
    <text evidence="6 7 8 10">Component of pre-60S ribosomal complexes.</text>
</comment>
<comment type="interaction">
    <interactant intactId="EBI-17819">
        <id>P25808</id>
    </interactant>
    <interactant intactId="EBI-6289">
        <id>P36049</id>
        <label>EBP2</label>
    </interactant>
    <organismsDiffer>false</organismsDiffer>
    <experiments>3</experiments>
</comment>
<comment type="subcellular location">
    <subcellularLocation>
        <location evidence="4 11">Nucleus</location>
        <location evidence="4 11">Nucleolus</location>
    </subcellularLocation>
</comment>
<comment type="domain">
    <text evidence="13">The Q motif is unique to and characteristic of the DEAD box family of RNA helicases and controls ATP binding and hydrolysis.</text>
</comment>
<comment type="miscellaneous">
    <text evidence="5">Present with 5740 molecules/cell in log phase SD medium.</text>
</comment>
<comment type="similarity">
    <text evidence="13">Belongs to the DEAD box helicase family. DDX55/SPB4 subfamily.</text>
</comment>
<evidence type="ECO:0000255" key="1"/>
<evidence type="ECO:0000255" key="2">
    <source>
        <dbReference type="PROSITE-ProRule" id="PRU00541"/>
    </source>
</evidence>
<evidence type="ECO:0000255" key="3">
    <source>
        <dbReference type="PROSITE-ProRule" id="PRU00542"/>
    </source>
</evidence>
<evidence type="ECO:0000269" key="4">
    <source>
    </source>
</evidence>
<evidence type="ECO:0000269" key="5">
    <source>
    </source>
</evidence>
<evidence type="ECO:0000269" key="6">
    <source>
    </source>
</evidence>
<evidence type="ECO:0000269" key="7">
    <source>
    </source>
</evidence>
<evidence type="ECO:0000269" key="8">
    <source>
    </source>
</evidence>
<evidence type="ECO:0000269" key="9">
    <source>
    </source>
</evidence>
<evidence type="ECO:0000269" key="10">
    <source>
    </source>
</evidence>
<evidence type="ECO:0000269" key="11">
    <source>
    </source>
</evidence>
<evidence type="ECO:0000303" key="12">
    <source>
    </source>
</evidence>
<evidence type="ECO:0000305" key="13"/>
<evidence type="ECO:0000312" key="14">
    <source>
        <dbReference type="SGD" id="S000001894"/>
    </source>
</evidence>
<evidence type="ECO:0007744" key="15">
    <source>
    </source>
</evidence>
<evidence type="ECO:0007829" key="16">
    <source>
        <dbReference type="PDB" id="7NAD"/>
    </source>
</evidence>
<evidence type="ECO:0007829" key="17">
    <source>
        <dbReference type="PDB" id="7R72"/>
    </source>
</evidence>
<feature type="chain" id="PRO_0000055065" description="ATP-dependent rRNA helicase SPB4">
    <location>
        <begin position="1"/>
        <end position="606"/>
    </location>
</feature>
<feature type="domain" description="Helicase ATP-binding" evidence="2">
    <location>
        <begin position="38"/>
        <end position="224"/>
    </location>
</feature>
<feature type="domain" description="Helicase C-terminal" evidence="3">
    <location>
        <begin position="248"/>
        <end position="404"/>
    </location>
</feature>
<feature type="coiled-coil region" evidence="1">
    <location>
        <begin position="539"/>
        <end position="582"/>
    </location>
</feature>
<feature type="short sequence motif" description="Q motif" evidence="13">
    <location>
        <begin position="7"/>
        <end position="35"/>
    </location>
</feature>
<feature type="short sequence motif" description="DEAD box" evidence="13">
    <location>
        <begin position="172"/>
        <end position="175"/>
    </location>
</feature>
<feature type="binding site" evidence="2">
    <location>
        <begin position="51"/>
        <end position="58"/>
    </location>
    <ligand>
        <name>ATP</name>
        <dbReference type="ChEBI" id="CHEBI:30616"/>
    </ligand>
</feature>
<feature type="modified residue" description="Phosphoserine" evidence="15">
    <location>
        <position position="254"/>
    </location>
</feature>
<feature type="mutagenesis site" description="Leads to accumulation of 35S and 27SB pre-rRNAs and a net 40S ribosomal subunit defect." evidence="6">
    <original>R</original>
    <variation>G</variation>
    <location>
        <position position="360"/>
    </location>
</feature>
<feature type="helix" evidence="16">
    <location>
        <begin position="16"/>
        <end position="25"/>
    </location>
</feature>
<feature type="helix" evidence="16">
    <location>
        <begin position="32"/>
        <end position="41"/>
    </location>
</feature>
<feature type="turn" evidence="16">
    <location>
        <begin position="42"/>
        <end position="44"/>
    </location>
</feature>
<feature type="strand" evidence="16">
    <location>
        <begin position="46"/>
        <end position="50"/>
    </location>
</feature>
<feature type="helix" evidence="16">
    <location>
        <begin position="57"/>
        <end position="71"/>
    </location>
</feature>
<feature type="strand" evidence="16">
    <location>
        <begin position="85"/>
        <end position="89"/>
    </location>
</feature>
<feature type="helix" evidence="16">
    <location>
        <begin position="93"/>
        <end position="107"/>
    </location>
</feature>
<feature type="strand" evidence="16">
    <location>
        <begin position="112"/>
        <end position="114"/>
    </location>
</feature>
<feature type="strand" evidence="16">
    <location>
        <begin position="119"/>
        <end position="122"/>
    </location>
</feature>
<feature type="helix" evidence="16">
    <location>
        <begin position="130"/>
        <end position="140"/>
    </location>
</feature>
<feature type="strand" evidence="16">
    <location>
        <begin position="143"/>
        <end position="147"/>
    </location>
</feature>
<feature type="helix" evidence="16">
    <location>
        <begin position="149"/>
        <end position="157"/>
    </location>
</feature>
<feature type="strand" evidence="16">
    <location>
        <begin position="168"/>
        <end position="172"/>
    </location>
</feature>
<feature type="helix" evidence="16">
    <location>
        <begin position="174"/>
        <end position="177"/>
    </location>
</feature>
<feature type="turn" evidence="16">
    <location>
        <begin position="180"/>
        <end position="182"/>
    </location>
</feature>
<feature type="helix" evidence="16">
    <location>
        <begin position="183"/>
        <end position="192"/>
    </location>
</feature>
<feature type="strand" evidence="16">
    <location>
        <begin position="195"/>
        <end position="203"/>
    </location>
</feature>
<feature type="turn" evidence="16">
    <location>
        <begin position="204"/>
        <end position="208"/>
    </location>
</feature>
<feature type="helix" evidence="16">
    <location>
        <begin position="212"/>
        <end position="216"/>
    </location>
</feature>
<feature type="strand" evidence="16">
    <location>
        <begin position="219"/>
        <end position="226"/>
    </location>
</feature>
<feature type="strand" evidence="16">
    <location>
        <begin position="236"/>
        <end position="242"/>
    </location>
</feature>
<feature type="helix" evidence="16">
    <location>
        <begin position="245"/>
        <end position="247"/>
    </location>
</feature>
<feature type="helix" evidence="16">
    <location>
        <begin position="248"/>
        <end position="256"/>
    </location>
</feature>
<feature type="strand" evidence="16">
    <location>
        <begin position="262"/>
        <end position="267"/>
    </location>
</feature>
<feature type="helix" evidence="16">
    <location>
        <begin position="271"/>
        <end position="286"/>
    </location>
</feature>
<feature type="strand" evidence="16">
    <location>
        <begin position="292"/>
        <end position="299"/>
    </location>
</feature>
<feature type="helix" evidence="16">
    <location>
        <begin position="305"/>
        <end position="316"/>
    </location>
</feature>
<feature type="strand" evidence="16">
    <location>
        <begin position="321"/>
        <end position="326"/>
    </location>
</feature>
<feature type="turn" evidence="16">
    <location>
        <begin position="328"/>
        <end position="331"/>
    </location>
</feature>
<feature type="strand" evidence="16">
    <location>
        <begin position="341"/>
        <end position="346"/>
    </location>
</feature>
<feature type="strand" evidence="16">
    <location>
        <begin position="349"/>
        <end position="351"/>
    </location>
</feature>
<feature type="helix" evidence="16">
    <location>
        <begin position="354"/>
        <end position="357"/>
    </location>
</feature>
<feature type="helix" evidence="16">
    <location>
        <begin position="358"/>
        <end position="360"/>
    </location>
</feature>
<feature type="helix" evidence="16">
    <location>
        <begin position="363"/>
        <end position="365"/>
    </location>
</feature>
<feature type="strand" evidence="16">
    <location>
        <begin position="368"/>
        <end position="374"/>
    </location>
</feature>
<feature type="strand" evidence="16">
    <location>
        <begin position="376"/>
        <end position="378"/>
    </location>
</feature>
<feature type="helix" evidence="16">
    <location>
        <begin position="379"/>
        <end position="388"/>
    </location>
</feature>
<feature type="strand" evidence="17">
    <location>
        <begin position="404"/>
        <end position="406"/>
    </location>
</feature>
<feature type="helix" evidence="16">
    <location>
        <begin position="407"/>
        <end position="415"/>
    </location>
</feature>
<feature type="helix" evidence="16">
    <location>
        <begin position="419"/>
        <end position="437"/>
    </location>
</feature>
<feature type="turn" evidence="16">
    <location>
        <begin position="442"/>
        <end position="444"/>
    </location>
</feature>
<feature type="helix" evidence="16">
    <location>
        <begin position="452"/>
        <end position="458"/>
    </location>
</feature>
<feature type="helix" evidence="16">
    <location>
        <begin position="468"/>
        <end position="473"/>
    </location>
</feature>
<feature type="strand" evidence="16">
    <location>
        <begin position="488"/>
        <end position="491"/>
    </location>
</feature>
<feature type="helix" evidence="16">
    <location>
        <begin position="503"/>
        <end position="514"/>
    </location>
</feature>
<feature type="helix" evidence="16">
    <location>
        <begin position="516"/>
        <end position="532"/>
    </location>
</feature>
<feature type="helix" evidence="16">
    <location>
        <begin position="537"/>
        <end position="557"/>
    </location>
</feature>
<protein>
    <recommendedName>
        <fullName evidence="13">ATP-dependent rRNA helicase SPB4</fullName>
        <ecNumber evidence="9">3.6.4.13</ecNumber>
    </recommendedName>
    <alternativeName>
        <fullName evidence="12">Suppressor of PAB1 protein 4</fullName>
    </alternativeName>
</protein>
<keyword id="KW-0002">3D-structure</keyword>
<keyword id="KW-0067">ATP-binding</keyword>
<keyword id="KW-0175">Coiled coil</keyword>
<keyword id="KW-0347">Helicase</keyword>
<keyword id="KW-0378">Hydrolase</keyword>
<keyword id="KW-0547">Nucleotide-binding</keyword>
<keyword id="KW-0539">Nucleus</keyword>
<keyword id="KW-0597">Phosphoprotein</keyword>
<keyword id="KW-1185">Reference proteome</keyword>
<keyword id="KW-0690">Ribosome biogenesis</keyword>
<keyword id="KW-0694">RNA-binding</keyword>
<keyword id="KW-0698">rRNA processing</keyword>
<organism>
    <name type="scientific">Saccharomyces cerevisiae (strain ATCC 204508 / S288c)</name>
    <name type="common">Baker's yeast</name>
    <dbReference type="NCBI Taxonomy" id="559292"/>
    <lineage>
        <taxon>Eukaryota</taxon>
        <taxon>Fungi</taxon>
        <taxon>Dikarya</taxon>
        <taxon>Ascomycota</taxon>
        <taxon>Saccharomycotina</taxon>
        <taxon>Saccharomycetes</taxon>
        <taxon>Saccharomycetales</taxon>
        <taxon>Saccharomycetaceae</taxon>
        <taxon>Saccharomyces</taxon>
    </lineage>
</organism>
<proteinExistence type="evidence at protein level"/>
<accession>P25808</accession>
<accession>D6VTM9</accession>
<name>SPB4_YEAST</name>
<gene>
    <name evidence="12" type="primary">SPB4</name>
    <name evidence="14" type="ordered locus">YFL002C</name>
</gene>